<dbReference type="EC" id="2.4.99.17" evidence="1"/>
<dbReference type="EMBL" id="CP000133">
    <property type="protein sequence ID" value="ABC90900.1"/>
    <property type="molecule type" value="Genomic_DNA"/>
</dbReference>
<dbReference type="RefSeq" id="WP_011425382.1">
    <property type="nucleotide sequence ID" value="NC_007761.1"/>
</dbReference>
<dbReference type="SMR" id="Q2K8D6"/>
<dbReference type="KEGG" id="ret:RHE_CH02116"/>
<dbReference type="eggNOG" id="COG0809">
    <property type="taxonomic scope" value="Bacteria"/>
</dbReference>
<dbReference type="HOGENOM" id="CLU_039110_1_1_5"/>
<dbReference type="OrthoDB" id="9805933at2"/>
<dbReference type="UniPathway" id="UPA00392"/>
<dbReference type="Proteomes" id="UP000001936">
    <property type="component" value="Chromosome"/>
</dbReference>
<dbReference type="GO" id="GO:0005737">
    <property type="term" value="C:cytoplasm"/>
    <property type="evidence" value="ECO:0007669"/>
    <property type="project" value="UniProtKB-SubCell"/>
</dbReference>
<dbReference type="GO" id="GO:0051075">
    <property type="term" value="F:S-adenosylmethionine:tRNA ribosyltransferase-isomerase activity"/>
    <property type="evidence" value="ECO:0007669"/>
    <property type="project" value="UniProtKB-EC"/>
</dbReference>
<dbReference type="GO" id="GO:0008616">
    <property type="term" value="P:queuosine biosynthetic process"/>
    <property type="evidence" value="ECO:0007669"/>
    <property type="project" value="UniProtKB-UniRule"/>
</dbReference>
<dbReference type="GO" id="GO:0002099">
    <property type="term" value="P:tRNA wobble guanine modification"/>
    <property type="evidence" value="ECO:0007669"/>
    <property type="project" value="TreeGrafter"/>
</dbReference>
<dbReference type="Gene3D" id="2.40.10.240">
    <property type="entry name" value="QueA-like"/>
    <property type="match status" value="1"/>
</dbReference>
<dbReference type="Gene3D" id="3.40.1780.10">
    <property type="entry name" value="QueA-like"/>
    <property type="match status" value="1"/>
</dbReference>
<dbReference type="HAMAP" id="MF_00113">
    <property type="entry name" value="QueA"/>
    <property type="match status" value="1"/>
</dbReference>
<dbReference type="InterPro" id="IPR003699">
    <property type="entry name" value="QueA"/>
</dbReference>
<dbReference type="InterPro" id="IPR042118">
    <property type="entry name" value="QueA_dom1"/>
</dbReference>
<dbReference type="InterPro" id="IPR042119">
    <property type="entry name" value="QueA_dom2"/>
</dbReference>
<dbReference type="InterPro" id="IPR036100">
    <property type="entry name" value="QueA_sf"/>
</dbReference>
<dbReference type="NCBIfam" id="NF001140">
    <property type="entry name" value="PRK00147.1"/>
    <property type="match status" value="1"/>
</dbReference>
<dbReference type="NCBIfam" id="TIGR00113">
    <property type="entry name" value="queA"/>
    <property type="match status" value="1"/>
</dbReference>
<dbReference type="PANTHER" id="PTHR30307">
    <property type="entry name" value="S-ADENOSYLMETHIONINE:TRNA RIBOSYLTRANSFERASE-ISOMERASE"/>
    <property type="match status" value="1"/>
</dbReference>
<dbReference type="PANTHER" id="PTHR30307:SF0">
    <property type="entry name" value="S-ADENOSYLMETHIONINE:TRNA RIBOSYLTRANSFERASE-ISOMERASE"/>
    <property type="match status" value="1"/>
</dbReference>
<dbReference type="Pfam" id="PF02547">
    <property type="entry name" value="Queuosine_synth"/>
    <property type="match status" value="1"/>
</dbReference>
<dbReference type="SUPFAM" id="SSF111337">
    <property type="entry name" value="QueA-like"/>
    <property type="match status" value="1"/>
</dbReference>
<keyword id="KW-0963">Cytoplasm</keyword>
<keyword id="KW-0671">Queuosine biosynthesis</keyword>
<keyword id="KW-1185">Reference proteome</keyword>
<keyword id="KW-0949">S-adenosyl-L-methionine</keyword>
<keyword id="KW-0808">Transferase</keyword>
<organism>
    <name type="scientific">Rhizobium etli (strain ATCC 51251 / DSM 11541 / JCM 21823 / NBRC 15573 / CFN 42)</name>
    <dbReference type="NCBI Taxonomy" id="347834"/>
    <lineage>
        <taxon>Bacteria</taxon>
        <taxon>Pseudomonadati</taxon>
        <taxon>Pseudomonadota</taxon>
        <taxon>Alphaproteobacteria</taxon>
        <taxon>Hyphomicrobiales</taxon>
        <taxon>Rhizobiaceae</taxon>
        <taxon>Rhizobium/Agrobacterium group</taxon>
        <taxon>Rhizobium</taxon>
    </lineage>
</organism>
<gene>
    <name evidence="1" type="primary">queA</name>
    <name type="ordered locus">RHE_CH02116</name>
</gene>
<feature type="chain" id="PRO_1000015254" description="S-adenosylmethionine:tRNA ribosyltransferase-isomerase">
    <location>
        <begin position="1"/>
        <end position="361"/>
    </location>
</feature>
<protein>
    <recommendedName>
        <fullName evidence="1">S-adenosylmethionine:tRNA ribosyltransferase-isomerase</fullName>
        <ecNumber evidence="1">2.4.99.17</ecNumber>
    </recommendedName>
    <alternativeName>
        <fullName evidence="1">Queuosine biosynthesis protein QueA</fullName>
    </alternativeName>
</protein>
<accession>Q2K8D6</accession>
<name>QUEA_RHIEC</name>
<sequence length="361" mass="39108">MRVDLFDFDLPDERIALRPAEPRDSARLLVVDPDAESALSDHHVCDLPSFLRAGDALVFNDTKVIPAQLEGIRHRDGAGGQQVSATLHMRIGPSRWKAFAKPGKRIKEGDRIAFGHSGESCMIGSLDATVEEKGEAGEVTLAFDLSGPVLDEAIAAVGHIPLPPYIAAKRPEDERDRADYQTIYAREEGAVAAPTAGLHFTPALFEALDKAGIERHFVTLHVGAGTFLPVKADDTDDHKMHLESGYVSGEIAAGLNAVKARGGRIVCVGTTSLRLIESAAGESGEIKPWAGATGIFITPGYRFKAVDMLMTNFHLPRSTLFMLVSAFSGFETMHAAYKHAISTGYRFYSYGDASLLFRKDK</sequence>
<evidence type="ECO:0000255" key="1">
    <source>
        <dbReference type="HAMAP-Rule" id="MF_00113"/>
    </source>
</evidence>
<reference key="1">
    <citation type="journal article" date="2006" name="Proc. Natl. Acad. Sci. U.S.A.">
        <title>The partitioned Rhizobium etli genome: genetic and metabolic redundancy in seven interacting replicons.</title>
        <authorList>
            <person name="Gonzalez V."/>
            <person name="Santamaria R.I."/>
            <person name="Bustos P."/>
            <person name="Hernandez-Gonzalez I."/>
            <person name="Medrano-Soto A."/>
            <person name="Moreno-Hagelsieb G."/>
            <person name="Janga S.C."/>
            <person name="Ramirez M.A."/>
            <person name="Jimenez-Jacinto V."/>
            <person name="Collado-Vides J."/>
            <person name="Davila G."/>
        </authorList>
    </citation>
    <scope>NUCLEOTIDE SEQUENCE [LARGE SCALE GENOMIC DNA]</scope>
    <source>
        <strain>ATCC 51251 / DSM 11541 / JCM 21823 / NBRC 15573 / CFN 42</strain>
    </source>
</reference>
<proteinExistence type="inferred from homology"/>
<comment type="function">
    <text evidence="1">Transfers and isomerizes the ribose moiety from AdoMet to the 7-aminomethyl group of 7-deazaguanine (preQ1-tRNA) to give epoxyqueuosine (oQ-tRNA).</text>
</comment>
<comment type="catalytic activity">
    <reaction evidence="1">
        <text>7-aminomethyl-7-carbaguanosine(34) in tRNA + S-adenosyl-L-methionine = epoxyqueuosine(34) in tRNA + adenine + L-methionine + 2 H(+)</text>
        <dbReference type="Rhea" id="RHEA:32155"/>
        <dbReference type="Rhea" id="RHEA-COMP:10342"/>
        <dbReference type="Rhea" id="RHEA-COMP:18582"/>
        <dbReference type="ChEBI" id="CHEBI:15378"/>
        <dbReference type="ChEBI" id="CHEBI:16708"/>
        <dbReference type="ChEBI" id="CHEBI:57844"/>
        <dbReference type="ChEBI" id="CHEBI:59789"/>
        <dbReference type="ChEBI" id="CHEBI:82833"/>
        <dbReference type="ChEBI" id="CHEBI:194443"/>
        <dbReference type="EC" id="2.4.99.17"/>
    </reaction>
</comment>
<comment type="pathway">
    <text evidence="1">tRNA modification; tRNA-queuosine biosynthesis.</text>
</comment>
<comment type="subunit">
    <text evidence="1">Monomer.</text>
</comment>
<comment type="subcellular location">
    <subcellularLocation>
        <location evidence="1">Cytoplasm</location>
    </subcellularLocation>
</comment>
<comment type="similarity">
    <text evidence="1">Belongs to the QueA family.</text>
</comment>